<feature type="chain" id="PRO_0000112466" description="N-acetyl-gamma-glutamyl-phosphate reductase">
    <location>
        <begin position="1"/>
        <end position="339"/>
    </location>
</feature>
<feature type="active site" evidence="1">
    <location>
        <position position="145"/>
    </location>
</feature>
<feature type="strand" evidence="2">
    <location>
        <begin position="2"/>
        <end position="8"/>
    </location>
</feature>
<feature type="helix" evidence="2">
    <location>
        <begin position="12"/>
        <end position="23"/>
    </location>
</feature>
<feature type="strand" evidence="2">
    <location>
        <begin position="27"/>
        <end position="33"/>
    </location>
</feature>
<feature type="turn" evidence="2">
    <location>
        <begin position="36"/>
        <end position="39"/>
    </location>
</feature>
<feature type="helix" evidence="2">
    <location>
        <begin position="42"/>
        <end position="45"/>
    </location>
</feature>
<feature type="helix" evidence="2">
    <location>
        <begin position="47"/>
        <end position="49"/>
    </location>
</feature>
<feature type="helix" evidence="2">
    <location>
        <begin position="60"/>
        <end position="66"/>
    </location>
</feature>
<feature type="strand" evidence="2">
    <location>
        <begin position="68"/>
        <end position="72"/>
    </location>
</feature>
<feature type="helix" evidence="2">
    <location>
        <begin position="78"/>
        <end position="83"/>
    </location>
</feature>
<feature type="strand" evidence="2">
    <location>
        <begin position="90"/>
        <end position="96"/>
    </location>
</feature>
<feature type="turn" evidence="2">
    <location>
        <begin position="97"/>
        <end position="99"/>
    </location>
</feature>
<feature type="helix" evidence="2">
    <location>
        <begin position="103"/>
        <end position="110"/>
    </location>
</feature>
<feature type="helix" evidence="2">
    <location>
        <begin position="117"/>
        <end position="119"/>
    </location>
</feature>
<feature type="strand" evidence="2">
    <location>
        <begin position="122"/>
        <end position="124"/>
    </location>
</feature>
<feature type="helix" evidence="2">
    <location>
        <begin position="127"/>
        <end position="134"/>
    </location>
</feature>
<feature type="strand" evidence="2">
    <location>
        <begin position="138"/>
        <end position="141"/>
    </location>
</feature>
<feature type="helix" evidence="2">
    <location>
        <begin position="145"/>
        <end position="159"/>
    </location>
</feature>
<feature type="strand" evidence="2">
    <location>
        <begin position="166"/>
        <end position="175"/>
    </location>
</feature>
<feature type="helix" evidence="2">
    <location>
        <begin position="176"/>
        <end position="179"/>
    </location>
</feature>
<feature type="helix" evidence="2">
    <location>
        <begin position="185"/>
        <end position="187"/>
    </location>
</feature>
<feature type="helix" evidence="2">
    <location>
        <begin position="189"/>
        <end position="192"/>
    </location>
</feature>
<feature type="helix" evidence="2">
    <location>
        <begin position="206"/>
        <end position="218"/>
    </location>
</feature>
<feature type="strand" evidence="2">
    <location>
        <begin position="223"/>
        <end position="235"/>
    </location>
</feature>
<feature type="strand" evidence="2">
    <location>
        <begin position="237"/>
        <end position="244"/>
    </location>
</feature>
<feature type="helix" evidence="2">
    <location>
        <begin position="249"/>
        <end position="260"/>
    </location>
</feature>
<feature type="strand" evidence="2">
    <location>
        <begin position="266"/>
        <end position="268"/>
    </location>
</feature>
<feature type="helix" evidence="2">
    <location>
        <begin position="277"/>
        <end position="280"/>
    </location>
</feature>
<feature type="strand" evidence="2">
    <location>
        <begin position="286"/>
        <end position="293"/>
    </location>
</feature>
<feature type="turn" evidence="2">
    <location>
        <begin position="294"/>
        <end position="297"/>
    </location>
</feature>
<feature type="strand" evidence="2">
    <location>
        <begin position="298"/>
        <end position="305"/>
    </location>
</feature>
<feature type="turn" evidence="2">
    <location>
        <begin position="307"/>
        <end position="312"/>
    </location>
</feature>
<feature type="helix" evidence="2">
    <location>
        <begin position="313"/>
        <end position="323"/>
    </location>
</feature>
<feature type="turn" evidence="2">
    <location>
        <begin position="328"/>
        <end position="331"/>
    </location>
</feature>
<keyword id="KW-0002">3D-structure</keyword>
<keyword id="KW-0028">Amino-acid biosynthesis</keyword>
<keyword id="KW-0055">Arginine biosynthesis</keyword>
<keyword id="KW-0963">Cytoplasm</keyword>
<keyword id="KW-0521">NADP</keyword>
<keyword id="KW-0560">Oxidoreductase</keyword>
<keyword id="KW-1185">Reference proteome</keyword>
<organism>
    <name type="scientific">Thermotoga maritima (strain ATCC 43589 / DSM 3109 / JCM 10099 / NBRC 100826 / MSB8)</name>
    <dbReference type="NCBI Taxonomy" id="243274"/>
    <lineage>
        <taxon>Bacteria</taxon>
        <taxon>Thermotogati</taxon>
        <taxon>Thermotogota</taxon>
        <taxon>Thermotogae</taxon>
        <taxon>Thermotogales</taxon>
        <taxon>Thermotogaceae</taxon>
        <taxon>Thermotoga</taxon>
    </lineage>
</organism>
<evidence type="ECO:0000255" key="1">
    <source>
        <dbReference type="HAMAP-Rule" id="MF_00150"/>
    </source>
</evidence>
<evidence type="ECO:0007829" key="2">
    <source>
        <dbReference type="PDB" id="1VKN"/>
    </source>
</evidence>
<gene>
    <name evidence="1" type="primary">argC</name>
    <name type="ordered locus">TM_1782</name>
</gene>
<accession>Q9X2A2</accession>
<reference key="1">
    <citation type="journal article" date="1999" name="Nature">
        <title>Evidence for lateral gene transfer between Archaea and Bacteria from genome sequence of Thermotoga maritima.</title>
        <authorList>
            <person name="Nelson K.E."/>
            <person name="Clayton R.A."/>
            <person name="Gill S.R."/>
            <person name="Gwinn M.L."/>
            <person name="Dodson R.J."/>
            <person name="Haft D.H."/>
            <person name="Hickey E.K."/>
            <person name="Peterson J.D."/>
            <person name="Nelson W.C."/>
            <person name="Ketchum K.A."/>
            <person name="McDonald L.A."/>
            <person name="Utterback T.R."/>
            <person name="Malek J.A."/>
            <person name="Linher K.D."/>
            <person name="Garrett M.M."/>
            <person name="Stewart A.M."/>
            <person name="Cotton M.D."/>
            <person name="Pratt M.S."/>
            <person name="Phillips C.A."/>
            <person name="Richardson D.L."/>
            <person name="Heidelberg J.F."/>
            <person name="Sutton G.G."/>
            <person name="Fleischmann R.D."/>
            <person name="Eisen J.A."/>
            <person name="White O."/>
            <person name="Salzberg S.L."/>
            <person name="Smith H.O."/>
            <person name="Venter J.C."/>
            <person name="Fraser C.M."/>
        </authorList>
    </citation>
    <scope>NUCLEOTIDE SEQUENCE [LARGE SCALE GENOMIC DNA]</scope>
    <source>
        <strain>ATCC 43589 / DSM 3109 / JCM 10099 / NBRC 100826 / MSB8</strain>
    </source>
</reference>
<dbReference type="EC" id="1.2.1.38" evidence="1"/>
<dbReference type="EMBL" id="AE000512">
    <property type="protein sequence ID" value="AAD36845.1"/>
    <property type="molecule type" value="Genomic_DNA"/>
</dbReference>
<dbReference type="PIR" id="A72211">
    <property type="entry name" value="A72211"/>
</dbReference>
<dbReference type="RefSeq" id="NP_229579.1">
    <property type="nucleotide sequence ID" value="NC_000853.1"/>
</dbReference>
<dbReference type="RefSeq" id="WP_004082328.1">
    <property type="nucleotide sequence ID" value="NZ_CP011107.1"/>
</dbReference>
<dbReference type="PDB" id="1VKN">
    <property type="method" value="X-ray"/>
    <property type="resolution" value="1.80 A"/>
    <property type="chains" value="A/B/C/D=1-339"/>
</dbReference>
<dbReference type="PDBsum" id="1VKN"/>
<dbReference type="SMR" id="Q9X2A2"/>
<dbReference type="FunCoup" id="Q9X2A2">
    <property type="interactions" value="307"/>
</dbReference>
<dbReference type="STRING" id="243274.TM_1782"/>
<dbReference type="PaxDb" id="243274-THEMA_05290"/>
<dbReference type="EnsemblBacteria" id="AAD36845">
    <property type="protein sequence ID" value="AAD36845"/>
    <property type="gene ID" value="TM_1782"/>
</dbReference>
<dbReference type="KEGG" id="tma:TM1782"/>
<dbReference type="KEGG" id="tmi:THEMA_05290"/>
<dbReference type="KEGG" id="tmm:Tmari_1791"/>
<dbReference type="KEGG" id="tmw:THMA_1826"/>
<dbReference type="eggNOG" id="COG0002">
    <property type="taxonomic scope" value="Bacteria"/>
</dbReference>
<dbReference type="InParanoid" id="Q9X2A2"/>
<dbReference type="OrthoDB" id="9801289at2"/>
<dbReference type="UniPathway" id="UPA00068">
    <property type="reaction ID" value="UER00108"/>
</dbReference>
<dbReference type="EvolutionaryTrace" id="Q9X2A2"/>
<dbReference type="Proteomes" id="UP000008183">
    <property type="component" value="Chromosome"/>
</dbReference>
<dbReference type="GO" id="GO:0005737">
    <property type="term" value="C:cytoplasm"/>
    <property type="evidence" value="ECO:0007669"/>
    <property type="project" value="UniProtKB-SubCell"/>
</dbReference>
<dbReference type="GO" id="GO:0003942">
    <property type="term" value="F:N-acetyl-gamma-glutamyl-phosphate reductase activity"/>
    <property type="evidence" value="ECO:0007669"/>
    <property type="project" value="UniProtKB-UniRule"/>
</dbReference>
<dbReference type="GO" id="GO:0051287">
    <property type="term" value="F:NAD binding"/>
    <property type="evidence" value="ECO:0007669"/>
    <property type="project" value="InterPro"/>
</dbReference>
<dbReference type="GO" id="GO:0070401">
    <property type="term" value="F:NADP+ binding"/>
    <property type="evidence" value="ECO:0007669"/>
    <property type="project" value="InterPro"/>
</dbReference>
<dbReference type="GO" id="GO:0006526">
    <property type="term" value="P:L-arginine biosynthetic process"/>
    <property type="evidence" value="ECO:0007669"/>
    <property type="project" value="UniProtKB-UniRule"/>
</dbReference>
<dbReference type="CDD" id="cd23934">
    <property type="entry name" value="AGPR_1_C"/>
    <property type="match status" value="1"/>
</dbReference>
<dbReference type="CDD" id="cd17895">
    <property type="entry name" value="AGPR_1_N"/>
    <property type="match status" value="1"/>
</dbReference>
<dbReference type="FunFam" id="3.30.360.10:FF:000014">
    <property type="entry name" value="N-acetyl-gamma-glutamyl-phosphate reductase"/>
    <property type="match status" value="1"/>
</dbReference>
<dbReference type="Gene3D" id="3.30.360.10">
    <property type="entry name" value="Dihydrodipicolinate Reductase, domain 2"/>
    <property type="match status" value="1"/>
</dbReference>
<dbReference type="Gene3D" id="3.40.50.720">
    <property type="entry name" value="NAD(P)-binding Rossmann-like Domain"/>
    <property type="match status" value="1"/>
</dbReference>
<dbReference type="HAMAP" id="MF_00150">
    <property type="entry name" value="ArgC_type1"/>
    <property type="match status" value="1"/>
</dbReference>
<dbReference type="InterPro" id="IPR023013">
    <property type="entry name" value="AGPR_AS"/>
</dbReference>
<dbReference type="InterPro" id="IPR000706">
    <property type="entry name" value="AGPR_type-1"/>
</dbReference>
<dbReference type="InterPro" id="IPR036291">
    <property type="entry name" value="NAD(P)-bd_dom_sf"/>
</dbReference>
<dbReference type="InterPro" id="IPR050085">
    <property type="entry name" value="NAGSA_dehydrogenase"/>
</dbReference>
<dbReference type="InterPro" id="IPR000534">
    <property type="entry name" value="Semialdehyde_DH_NAD-bd"/>
</dbReference>
<dbReference type="NCBIfam" id="TIGR01850">
    <property type="entry name" value="argC"/>
    <property type="match status" value="1"/>
</dbReference>
<dbReference type="PANTHER" id="PTHR32338:SF10">
    <property type="entry name" value="N-ACETYL-GAMMA-GLUTAMYL-PHOSPHATE REDUCTASE, CHLOROPLASTIC-RELATED"/>
    <property type="match status" value="1"/>
</dbReference>
<dbReference type="PANTHER" id="PTHR32338">
    <property type="entry name" value="N-ACETYL-GAMMA-GLUTAMYL-PHOSPHATE REDUCTASE, CHLOROPLASTIC-RELATED-RELATED"/>
    <property type="match status" value="1"/>
</dbReference>
<dbReference type="Pfam" id="PF01118">
    <property type="entry name" value="Semialdhyde_dh"/>
    <property type="match status" value="1"/>
</dbReference>
<dbReference type="Pfam" id="PF22698">
    <property type="entry name" value="Semialdhyde_dhC_1"/>
    <property type="match status" value="1"/>
</dbReference>
<dbReference type="SMART" id="SM00859">
    <property type="entry name" value="Semialdhyde_dh"/>
    <property type="match status" value="1"/>
</dbReference>
<dbReference type="SUPFAM" id="SSF55347">
    <property type="entry name" value="Glyceraldehyde-3-phosphate dehydrogenase-like, C-terminal domain"/>
    <property type="match status" value="1"/>
</dbReference>
<dbReference type="SUPFAM" id="SSF51735">
    <property type="entry name" value="NAD(P)-binding Rossmann-fold domains"/>
    <property type="match status" value="1"/>
</dbReference>
<dbReference type="PROSITE" id="PS01224">
    <property type="entry name" value="ARGC"/>
    <property type="match status" value="1"/>
</dbReference>
<name>ARGC_THEMA</name>
<comment type="function">
    <text evidence="1">Catalyzes the NADPH-dependent reduction of N-acetyl-5-glutamyl phosphate to yield N-acetyl-L-glutamate 5-semialdehyde.</text>
</comment>
<comment type="catalytic activity">
    <reaction evidence="1">
        <text>N-acetyl-L-glutamate 5-semialdehyde + phosphate + NADP(+) = N-acetyl-L-glutamyl 5-phosphate + NADPH + H(+)</text>
        <dbReference type="Rhea" id="RHEA:21588"/>
        <dbReference type="ChEBI" id="CHEBI:15378"/>
        <dbReference type="ChEBI" id="CHEBI:29123"/>
        <dbReference type="ChEBI" id="CHEBI:43474"/>
        <dbReference type="ChEBI" id="CHEBI:57783"/>
        <dbReference type="ChEBI" id="CHEBI:57936"/>
        <dbReference type="ChEBI" id="CHEBI:58349"/>
        <dbReference type="EC" id="1.2.1.38"/>
    </reaction>
</comment>
<comment type="pathway">
    <text evidence="1">Amino-acid biosynthesis; L-arginine biosynthesis; N(2)-acetyl-L-ornithine from L-glutamate: step 3/4.</text>
</comment>
<comment type="subcellular location">
    <subcellularLocation>
        <location evidence="1">Cytoplasm</location>
    </subcellularLocation>
</comment>
<comment type="similarity">
    <text evidence="1">Belongs to the NAGSA dehydrogenase family. Type 1 subfamily.</text>
</comment>
<protein>
    <recommendedName>
        <fullName evidence="1">N-acetyl-gamma-glutamyl-phosphate reductase</fullName>
        <shortName evidence="1">AGPR</shortName>
        <ecNumber evidence="1">1.2.1.38</ecNumber>
    </recommendedName>
    <alternativeName>
        <fullName evidence="1">N-acetyl-glutamate semialdehyde dehydrogenase</fullName>
        <shortName evidence="1">NAGSA dehydrogenase</shortName>
    </alternativeName>
</protein>
<sequence>MIRAGIIGATGYTGLELVRLLKNHPEAKITYLSSRTYAGKKLEEIFPSTLENSILSEFDPEKVSKNCDVLFTALPAGASYDLVRELKGVKIIDLGADFRFDDPGVYREWYGKELSGYENIKRVYGLPELHREEIKNAQVVGNPGCYPTSVILALAPALKHNLVDPETILVDAKSGVSGAGRKEKVDYLFSEVNESLRPYNVAKHRHVPEMEQELGKISGKKVNVVFTPHLVPMTRGILSTIYVKTDKSLEEIHEAYLEFYKNEPFVHVLPMGIYPSTKWCYGSNHVFIGMQMEERTNTLILMSAIDNLVKGASGQAVQNMNIMFGLDETKGLEFTPIYP</sequence>
<proteinExistence type="evidence at protein level"/>